<comment type="function">
    <text evidence="1">Regulates the expression of the mymA operon.</text>
</comment>
<comment type="PTM">
    <text evidence="1">Phosphorylated by PknK. Phosphorylation increases affinity for the mymA promoter (By similarity).</text>
</comment>
<comment type="sequence caution" evidence="3">
    <conflict type="erroneous initiation">
        <sequence resource="EMBL-CDS" id="AAK47503"/>
    </conflict>
    <text>Extended N-terminus.</text>
</comment>
<feature type="chain" id="PRO_0000427294" description="HTH-type transcriptional regulator VirS">
    <location>
        <begin position="1"/>
        <end position="340"/>
    </location>
</feature>
<feature type="domain" description="HTH araC/xylS-type" evidence="2">
    <location>
        <begin position="236"/>
        <end position="334"/>
    </location>
</feature>
<feature type="DNA-binding region" description="H-T-H motif" evidence="2">
    <location>
        <begin position="254"/>
        <end position="275"/>
    </location>
</feature>
<feature type="DNA-binding region" description="H-T-H motif" evidence="2">
    <location>
        <begin position="301"/>
        <end position="324"/>
    </location>
</feature>
<reference key="1">
    <citation type="journal article" date="2002" name="J. Bacteriol.">
        <title>Whole-genome comparison of Mycobacterium tuberculosis clinical and laboratory strains.</title>
        <authorList>
            <person name="Fleischmann R.D."/>
            <person name="Alland D."/>
            <person name="Eisen J.A."/>
            <person name="Carpenter L."/>
            <person name="White O."/>
            <person name="Peterson J.D."/>
            <person name="DeBoy R.T."/>
            <person name="Dodson R.J."/>
            <person name="Gwinn M.L."/>
            <person name="Haft D.H."/>
            <person name="Hickey E.K."/>
            <person name="Kolonay J.F."/>
            <person name="Nelson W.C."/>
            <person name="Umayam L.A."/>
            <person name="Ermolaeva M.D."/>
            <person name="Salzberg S.L."/>
            <person name="Delcher A."/>
            <person name="Utterback T.R."/>
            <person name="Weidman J.F."/>
            <person name="Khouri H.M."/>
            <person name="Gill J."/>
            <person name="Mikula A."/>
            <person name="Bishai W."/>
            <person name="Jacobs W.R. Jr."/>
            <person name="Venter J.C."/>
            <person name="Fraser C.M."/>
        </authorList>
    </citation>
    <scope>NUCLEOTIDE SEQUENCE [LARGE SCALE GENOMIC DNA]</scope>
    <source>
        <strain>CDC 1551 / Oshkosh</strain>
    </source>
</reference>
<proteinExistence type="inferred from homology"/>
<name>VIRS_MYCTO</name>
<sequence length="340" mass="37789">MELGSLIRATNLWGYTDLMRELGADPLPFLRRFDIPPGIEHQEDAFMSLAGFVRMLEASAAELDCPDFGLRLARWQGLGILGPVAVIARNAATLFGGLEAIGRYLYVHSPALTLTVSSTTARSNVRFGYEVTEPGIPYPLQGYELSMANAARMIRLLGGPQARARVFSFRHAQLGTDAAYREALGCTVRFGRTWCGFEVDHRLAGRPIDHADPETKRIATKYLESQYLPSDATLSERVVGLARRLLPTGQCSAEAIADQLDMHPRTLQRRLAAEGLRCHDLIERERRAQAARYLAQPGLYLSQIAVLLGYSEQSALNRSCRRWFGMTPRQYRAYGGVSGR</sequence>
<accession>P9WMJ2</accession>
<accession>L0TBI3</accession>
<accession>O53299</accession>
<accession>Q06861</accession>
<evidence type="ECO:0000250" key="1"/>
<evidence type="ECO:0000255" key="2">
    <source>
        <dbReference type="PROSITE-ProRule" id="PRU00593"/>
    </source>
</evidence>
<evidence type="ECO:0000305" key="3"/>
<gene>
    <name type="primary">virS</name>
    <name type="ordered locus">MT3167</name>
</gene>
<dbReference type="EMBL" id="AE000516">
    <property type="protein sequence ID" value="AAK47503.1"/>
    <property type="status" value="ALT_INIT"/>
    <property type="molecule type" value="Genomic_DNA"/>
</dbReference>
<dbReference type="PIR" id="F70852">
    <property type="entry name" value="F70852"/>
</dbReference>
<dbReference type="RefSeq" id="WP_003416068.1">
    <property type="nucleotide sequence ID" value="NZ_KK341227.1"/>
</dbReference>
<dbReference type="SMR" id="P9WMJ2"/>
<dbReference type="KEGG" id="mtc:MT3167"/>
<dbReference type="PATRIC" id="fig|83331.31.peg.3413"/>
<dbReference type="HOGENOM" id="CLU_047522_1_2_11"/>
<dbReference type="Proteomes" id="UP000001020">
    <property type="component" value="Chromosome"/>
</dbReference>
<dbReference type="GO" id="GO:0005829">
    <property type="term" value="C:cytosol"/>
    <property type="evidence" value="ECO:0007669"/>
    <property type="project" value="TreeGrafter"/>
</dbReference>
<dbReference type="GO" id="GO:0003700">
    <property type="term" value="F:DNA-binding transcription factor activity"/>
    <property type="evidence" value="ECO:0007669"/>
    <property type="project" value="InterPro"/>
</dbReference>
<dbReference type="GO" id="GO:0000976">
    <property type="term" value="F:transcription cis-regulatory region binding"/>
    <property type="evidence" value="ECO:0007669"/>
    <property type="project" value="TreeGrafter"/>
</dbReference>
<dbReference type="Gene3D" id="1.10.10.60">
    <property type="entry name" value="Homeodomain-like"/>
    <property type="match status" value="1"/>
</dbReference>
<dbReference type="InterPro" id="IPR032687">
    <property type="entry name" value="AraC-type_N"/>
</dbReference>
<dbReference type="InterPro" id="IPR009057">
    <property type="entry name" value="Homeodomain-like_sf"/>
</dbReference>
<dbReference type="InterPro" id="IPR018060">
    <property type="entry name" value="HTH_AraC"/>
</dbReference>
<dbReference type="PANTHER" id="PTHR47894">
    <property type="entry name" value="HTH-TYPE TRANSCRIPTIONAL REGULATOR GADX"/>
    <property type="match status" value="1"/>
</dbReference>
<dbReference type="PANTHER" id="PTHR47894:SF4">
    <property type="entry name" value="HTH-TYPE TRANSCRIPTIONAL REGULATOR GADX"/>
    <property type="match status" value="1"/>
</dbReference>
<dbReference type="Pfam" id="PF12625">
    <property type="entry name" value="Arabinose_bd"/>
    <property type="match status" value="1"/>
</dbReference>
<dbReference type="Pfam" id="PF12833">
    <property type="entry name" value="HTH_18"/>
    <property type="match status" value="1"/>
</dbReference>
<dbReference type="SMART" id="SM00342">
    <property type="entry name" value="HTH_ARAC"/>
    <property type="match status" value="1"/>
</dbReference>
<dbReference type="SUPFAM" id="SSF46689">
    <property type="entry name" value="Homeodomain-like"/>
    <property type="match status" value="1"/>
</dbReference>
<dbReference type="PROSITE" id="PS01124">
    <property type="entry name" value="HTH_ARAC_FAMILY_2"/>
    <property type="match status" value="1"/>
</dbReference>
<keyword id="KW-0238">DNA-binding</keyword>
<keyword id="KW-0597">Phosphoprotein</keyword>
<keyword id="KW-1185">Reference proteome</keyword>
<keyword id="KW-0804">Transcription</keyword>
<keyword id="KW-0805">Transcription regulation</keyword>
<keyword id="KW-0843">Virulence</keyword>
<organism>
    <name type="scientific">Mycobacterium tuberculosis (strain CDC 1551 / Oshkosh)</name>
    <dbReference type="NCBI Taxonomy" id="83331"/>
    <lineage>
        <taxon>Bacteria</taxon>
        <taxon>Bacillati</taxon>
        <taxon>Actinomycetota</taxon>
        <taxon>Actinomycetes</taxon>
        <taxon>Mycobacteriales</taxon>
        <taxon>Mycobacteriaceae</taxon>
        <taxon>Mycobacterium</taxon>
        <taxon>Mycobacterium tuberculosis complex</taxon>
    </lineage>
</organism>
<protein>
    <recommendedName>
        <fullName>HTH-type transcriptional regulator VirS</fullName>
    </recommendedName>
    <alternativeName>
        <fullName>Virulence-regulating protein VirS</fullName>
    </alternativeName>
</protein>